<protein>
    <recommendedName>
        <fullName evidence="1">UPF0229 protein BAMEG_4035</fullName>
    </recommendedName>
</protein>
<organism>
    <name type="scientific">Bacillus anthracis (strain CDC 684 / NRRL 3495)</name>
    <dbReference type="NCBI Taxonomy" id="568206"/>
    <lineage>
        <taxon>Bacteria</taxon>
        <taxon>Bacillati</taxon>
        <taxon>Bacillota</taxon>
        <taxon>Bacilli</taxon>
        <taxon>Bacillales</taxon>
        <taxon>Bacillaceae</taxon>
        <taxon>Bacillus</taxon>
        <taxon>Bacillus cereus group</taxon>
    </lineage>
</organism>
<gene>
    <name type="ordered locus">BAMEG_4035</name>
</gene>
<comment type="similarity">
    <text evidence="1">Belongs to the UPF0229 family.</text>
</comment>
<accession>C3LGL2</accession>
<feature type="chain" id="PRO_1000164974" description="UPF0229 protein BAMEG_4035">
    <location>
        <begin position="1"/>
        <end position="391"/>
    </location>
</feature>
<feature type="region of interest" description="Disordered" evidence="2">
    <location>
        <begin position="1"/>
        <end position="31"/>
    </location>
</feature>
<feature type="region of interest" description="Disordered" evidence="2">
    <location>
        <begin position="80"/>
        <end position="117"/>
    </location>
</feature>
<feature type="compositionally biased region" description="Polar residues" evidence="2">
    <location>
        <begin position="1"/>
        <end position="16"/>
    </location>
</feature>
<feature type="compositionally biased region" description="Basic and acidic residues" evidence="2">
    <location>
        <begin position="21"/>
        <end position="31"/>
    </location>
</feature>
<feature type="compositionally biased region" description="Gly residues" evidence="2">
    <location>
        <begin position="98"/>
        <end position="115"/>
    </location>
</feature>
<name>Y4035_BACAC</name>
<dbReference type="EMBL" id="CP001215">
    <property type="protein sequence ID" value="ACP17055.1"/>
    <property type="molecule type" value="Genomic_DNA"/>
</dbReference>
<dbReference type="SMR" id="C3LGL2"/>
<dbReference type="KEGG" id="bah:BAMEG_4035"/>
<dbReference type="HOGENOM" id="CLU_049702_2_0_9"/>
<dbReference type="HAMAP" id="MF_01232">
    <property type="entry name" value="UPF0229"/>
    <property type="match status" value="1"/>
</dbReference>
<dbReference type="InterPro" id="IPR014230">
    <property type="entry name" value="Spore_YhbH"/>
</dbReference>
<dbReference type="InterPro" id="IPR006698">
    <property type="entry name" value="UPF0229"/>
</dbReference>
<dbReference type="NCBIfam" id="TIGR02877">
    <property type="entry name" value="spore_yhbH"/>
    <property type="match status" value="1"/>
</dbReference>
<dbReference type="PANTHER" id="PTHR30510">
    <property type="entry name" value="UPF0229 PROTEIN YEAH"/>
    <property type="match status" value="1"/>
</dbReference>
<dbReference type="PANTHER" id="PTHR30510:SF2">
    <property type="entry name" value="UPF0229 PROTEIN YEAH"/>
    <property type="match status" value="1"/>
</dbReference>
<dbReference type="Pfam" id="PF04285">
    <property type="entry name" value="DUF444"/>
    <property type="match status" value="2"/>
</dbReference>
<proteinExistence type="inferred from homology"/>
<evidence type="ECO:0000255" key="1">
    <source>
        <dbReference type="HAMAP-Rule" id="MF_01232"/>
    </source>
</evidence>
<evidence type="ECO:0000256" key="2">
    <source>
        <dbReference type="SAM" id="MobiDB-lite"/>
    </source>
</evidence>
<sequence>MGEENQPNYTISQENWSLHRKGYDDQQRHQEKVQEAIKNNLPDLVTEESIVMSNGKDVVKIPIRSLDEYKIRYNYDKNKHVGQGNGDSKVGDVVARDGSGGQKQKGPGKGQGAGDAAGEDYYEAEVSILELEQAFFKELELPNLKRKEMDENRIEHVEFNDIRKTGLWGNIDKKRTMISAYKRNAMRGKASFHPIHQEDLKFRTWNEVLKPDSKAVVLAMMDTSGSMGIWEKYMARSFFFWMTRFLRTKYETVDIEFIAHHTEAKVVPEEEFFSKGESGGTICSSVYKKALELIDNKYSPDRYNIYPFHFSDGDNLTSDNARCVKLVEELMKKCNMFGYGEVNQYNRHSTLMSAYKNIKDENFRYYILKQKADVFHAMKSFFREESGEKMA</sequence>
<reference key="1">
    <citation type="submission" date="2008-10" db="EMBL/GenBank/DDBJ databases">
        <title>Genome sequence of Bacillus anthracis str. CDC 684.</title>
        <authorList>
            <person name="Dodson R.J."/>
            <person name="Munk A.C."/>
            <person name="Brettin T."/>
            <person name="Bruce D."/>
            <person name="Detter C."/>
            <person name="Tapia R."/>
            <person name="Han C."/>
            <person name="Sutton G."/>
            <person name="Sims D."/>
        </authorList>
    </citation>
    <scope>NUCLEOTIDE SEQUENCE [LARGE SCALE GENOMIC DNA]</scope>
    <source>
        <strain>CDC 684 / NRRL 3495</strain>
    </source>
</reference>